<proteinExistence type="evidence at transcript level"/>
<gene>
    <name type="primary">Mrgprb4</name>
    <name type="synonym">Mrgb4</name>
</gene>
<feature type="chain" id="PRO_0000305299" description="Mas-related G-protein coupled receptor member B4">
    <location>
        <begin position="1"/>
        <end position="321"/>
    </location>
</feature>
<feature type="topological domain" description="Extracellular" evidence="2">
    <location>
        <begin position="1"/>
        <end position="33"/>
    </location>
</feature>
<feature type="transmembrane region" description="Helical; Name=1" evidence="2">
    <location>
        <begin position="34"/>
        <end position="54"/>
    </location>
</feature>
<feature type="topological domain" description="Cytoplasmic" evidence="2">
    <location>
        <begin position="55"/>
        <end position="62"/>
    </location>
</feature>
<feature type="transmembrane region" description="Helical; Name=2" evidence="2">
    <location>
        <begin position="63"/>
        <end position="83"/>
    </location>
</feature>
<feature type="topological domain" description="Extracellular" evidence="2">
    <location>
        <begin position="84"/>
        <end position="97"/>
    </location>
</feature>
<feature type="transmembrane region" description="Helical; Name=3" evidence="2">
    <location>
        <begin position="98"/>
        <end position="118"/>
    </location>
</feature>
<feature type="topological domain" description="Cytoplasmic" evidence="2">
    <location>
        <begin position="119"/>
        <end position="146"/>
    </location>
</feature>
<feature type="transmembrane region" description="Helical; Name=4" evidence="2">
    <location>
        <begin position="147"/>
        <end position="167"/>
    </location>
</feature>
<feature type="topological domain" description="Extracellular" evidence="2">
    <location>
        <begin position="168"/>
        <end position="172"/>
    </location>
</feature>
<feature type="transmembrane region" description="Helical; Name=5" evidence="2">
    <location>
        <begin position="173"/>
        <end position="193"/>
    </location>
</feature>
<feature type="topological domain" description="Cytoplasmic" evidence="2">
    <location>
        <begin position="194"/>
        <end position="215"/>
    </location>
</feature>
<feature type="transmembrane region" description="Helical; Name=6" evidence="2">
    <location>
        <begin position="216"/>
        <end position="236"/>
    </location>
</feature>
<feature type="topological domain" description="Extracellular" evidence="2">
    <location>
        <begin position="237"/>
        <end position="257"/>
    </location>
</feature>
<feature type="transmembrane region" description="Helical; Name=7" evidence="2">
    <location>
        <begin position="258"/>
        <end position="278"/>
    </location>
</feature>
<feature type="topological domain" description="Cytoplasmic" evidence="2">
    <location>
        <begin position="279"/>
        <end position="321"/>
    </location>
</feature>
<feature type="region of interest" description="Disordered" evidence="4">
    <location>
        <begin position="299"/>
        <end position="321"/>
    </location>
</feature>
<feature type="glycosylation site" description="N-linked (GlcNAc...) asparagine" evidence="2">
    <location>
        <position position="11"/>
    </location>
</feature>
<feature type="glycosylation site" description="N-linked (GlcNAc...) asparagine" evidence="2">
    <location>
        <position position="16"/>
    </location>
</feature>
<feature type="glycosylation site" description="N-linked (GlcNAc...) asparagine" evidence="2">
    <location>
        <position position="94"/>
    </location>
</feature>
<organism>
    <name type="scientific">Mus musculus</name>
    <name type="common">Mouse</name>
    <dbReference type="NCBI Taxonomy" id="10090"/>
    <lineage>
        <taxon>Eukaryota</taxon>
        <taxon>Metazoa</taxon>
        <taxon>Chordata</taxon>
        <taxon>Craniata</taxon>
        <taxon>Vertebrata</taxon>
        <taxon>Euteleostomi</taxon>
        <taxon>Mammalia</taxon>
        <taxon>Eutheria</taxon>
        <taxon>Euarchontoglires</taxon>
        <taxon>Glires</taxon>
        <taxon>Rodentia</taxon>
        <taxon>Myomorpha</taxon>
        <taxon>Muroidea</taxon>
        <taxon>Muridae</taxon>
        <taxon>Murinae</taxon>
        <taxon>Mus</taxon>
        <taxon>Mus</taxon>
    </lineage>
</organism>
<evidence type="ECO:0000250" key="1"/>
<evidence type="ECO:0000255" key="2"/>
<evidence type="ECO:0000255" key="3">
    <source>
        <dbReference type="PROSITE-ProRule" id="PRU00521"/>
    </source>
</evidence>
<evidence type="ECO:0000256" key="4">
    <source>
        <dbReference type="SAM" id="MobiDB-lite"/>
    </source>
</evidence>
<evidence type="ECO:0000305" key="5"/>
<comment type="function">
    <text evidence="1">Orphan receptor. Probably involved in the function of nociceptive neurons. May regulate nociceptor function and/or development, including the sensation or modulation of pain (By similarity).</text>
</comment>
<comment type="subcellular location">
    <subcellularLocation>
        <location evidence="5">Membrane</location>
        <topology evidence="5">Multi-pass membrane protein</topology>
    </subcellularLocation>
</comment>
<comment type="similarity">
    <text evidence="3">Belongs to the G-protein coupled receptor 1 family. Mas subfamily.</text>
</comment>
<dbReference type="EMBL" id="AY042202">
    <property type="protein sequence ID" value="AAK91798.1"/>
    <property type="molecule type" value="Genomic_DNA"/>
</dbReference>
<dbReference type="EMBL" id="BC107202">
    <property type="protein sequence ID" value="AAI07203.1"/>
    <property type="molecule type" value="mRNA"/>
</dbReference>
<dbReference type="EMBL" id="BC107203">
    <property type="protein sequence ID" value="AAI07204.1"/>
    <property type="molecule type" value="mRNA"/>
</dbReference>
<dbReference type="CCDS" id="CCDS21301.1"/>
<dbReference type="RefSeq" id="NP_991364.1">
    <property type="nucleotide sequence ID" value="NM_205795.1"/>
</dbReference>
<dbReference type="SMR" id="Q91ZC0"/>
<dbReference type="FunCoup" id="Q91ZC0">
    <property type="interactions" value="48"/>
</dbReference>
<dbReference type="STRING" id="10090.ENSMUSP00000091952"/>
<dbReference type="GlyCosmos" id="Q91ZC0">
    <property type="glycosylation" value="3 sites, No reported glycans"/>
</dbReference>
<dbReference type="GlyGen" id="Q91ZC0">
    <property type="glycosylation" value="3 sites"/>
</dbReference>
<dbReference type="PaxDb" id="10090-ENSMUSP00000091952"/>
<dbReference type="DNASU" id="233230"/>
<dbReference type="Ensembl" id="ENSMUST00000094388.3">
    <property type="protein sequence ID" value="ENSMUSP00000091952.2"/>
    <property type="gene ID" value="ENSMUSG00000070550.3"/>
</dbReference>
<dbReference type="GeneID" id="233230"/>
<dbReference type="KEGG" id="mmu:233230"/>
<dbReference type="UCSC" id="uc009han.1">
    <property type="organism name" value="mouse"/>
</dbReference>
<dbReference type="AGR" id="MGI:3033119"/>
<dbReference type="CTD" id="233230"/>
<dbReference type="MGI" id="MGI:3033119">
    <property type="gene designation" value="Mrgprb4"/>
</dbReference>
<dbReference type="VEuPathDB" id="HostDB:ENSMUSG00000070550"/>
<dbReference type="eggNOG" id="ENOG502RTWA">
    <property type="taxonomic scope" value="Eukaryota"/>
</dbReference>
<dbReference type="GeneTree" id="ENSGT01030000234639"/>
<dbReference type="HOGENOM" id="CLU_009579_4_1_1"/>
<dbReference type="InParanoid" id="Q91ZC0"/>
<dbReference type="OMA" id="AWSINNT"/>
<dbReference type="OrthoDB" id="9631784at2759"/>
<dbReference type="PhylomeDB" id="Q91ZC0"/>
<dbReference type="TreeFam" id="TF336336"/>
<dbReference type="BioGRID-ORCS" id="233230">
    <property type="hits" value="2 hits in 78 CRISPR screens"/>
</dbReference>
<dbReference type="PRO" id="PR:Q91ZC0"/>
<dbReference type="Proteomes" id="UP000000589">
    <property type="component" value="Chromosome 7"/>
</dbReference>
<dbReference type="RNAct" id="Q91ZC0">
    <property type="molecule type" value="protein"/>
</dbReference>
<dbReference type="GO" id="GO:0016020">
    <property type="term" value="C:membrane"/>
    <property type="evidence" value="ECO:0007669"/>
    <property type="project" value="UniProtKB-SubCell"/>
</dbReference>
<dbReference type="GO" id="GO:0004930">
    <property type="term" value="F:G protein-coupled receptor activity"/>
    <property type="evidence" value="ECO:0007669"/>
    <property type="project" value="UniProtKB-KW"/>
</dbReference>
<dbReference type="CDD" id="cd15107">
    <property type="entry name" value="7tmA_MrgprB"/>
    <property type="match status" value="1"/>
</dbReference>
<dbReference type="FunFam" id="1.20.1070.10:FF:000140">
    <property type="entry name" value="Mas-related G-protein coupled receptor member X2"/>
    <property type="match status" value="1"/>
</dbReference>
<dbReference type="Gene3D" id="1.20.1070.10">
    <property type="entry name" value="Rhodopsin 7-helix transmembrane proteins"/>
    <property type="match status" value="1"/>
</dbReference>
<dbReference type="InterPro" id="IPR000276">
    <property type="entry name" value="GPCR_Rhodpsn"/>
</dbReference>
<dbReference type="InterPro" id="IPR017452">
    <property type="entry name" value="GPCR_Rhodpsn_7TM"/>
</dbReference>
<dbReference type="InterPro" id="IPR026234">
    <property type="entry name" value="MRGPCRFAMILY"/>
</dbReference>
<dbReference type="PANTHER" id="PTHR11334">
    <property type="entry name" value="MAS-RELATED G-PROTEIN COUPLED RECEPTOR"/>
    <property type="match status" value="1"/>
</dbReference>
<dbReference type="PANTHER" id="PTHR11334:SF36">
    <property type="entry name" value="MAS-RELATED G-PROTEIN COUPLED RECEPTOR MEMBER B4-RELATED"/>
    <property type="match status" value="1"/>
</dbReference>
<dbReference type="Pfam" id="PF00001">
    <property type="entry name" value="7tm_1"/>
    <property type="match status" value="1"/>
</dbReference>
<dbReference type="PRINTS" id="PR00237">
    <property type="entry name" value="GPCRRHODOPSN"/>
</dbReference>
<dbReference type="PRINTS" id="PR02108">
    <property type="entry name" value="MRGPCRFAMILY"/>
</dbReference>
<dbReference type="SUPFAM" id="SSF81321">
    <property type="entry name" value="Family A G protein-coupled receptor-like"/>
    <property type="match status" value="1"/>
</dbReference>
<dbReference type="PROSITE" id="PS00237">
    <property type="entry name" value="G_PROTEIN_RECEP_F1_1"/>
    <property type="match status" value="1"/>
</dbReference>
<dbReference type="PROSITE" id="PS50262">
    <property type="entry name" value="G_PROTEIN_RECEP_F1_2"/>
    <property type="match status" value="1"/>
</dbReference>
<name>MRGB4_MOUSE</name>
<keyword id="KW-0297">G-protein coupled receptor</keyword>
<keyword id="KW-0325">Glycoprotein</keyword>
<keyword id="KW-0472">Membrane</keyword>
<keyword id="KW-0675">Receptor</keyword>
<keyword id="KW-1185">Reference proteome</keyword>
<keyword id="KW-0807">Transducer</keyword>
<keyword id="KW-0812">Transmembrane</keyword>
<keyword id="KW-1133">Transmembrane helix</keyword>
<sequence length="321" mass="36338">MGTTTLAWNINNTAENGSYTEMFSCITKFNTLNFLTVIIAVVGLAGNGIVLWLLAFHLHRNAFSVYVLNLAGADFLYLFTQVVHSLECVLQLDNNSFYILLIVTMFAYLAGLCMIAAISAERCLSVMWPIWYHCQRPRHTSAIMCALVWVSSLLLSLVVGLGCGFLFSYYDYYFCITLNFITAAFLIVLSVVLSVSSLALLVKIVWGSHRIPVTRFFVTIALTVVVFIYFGMPFGICWFLLSRIMEFDSIFFNNVYEIIEFLSCVNSCANPIIYFLVGSIRQHRLRWQSLKLLLQRAMQDTPEEESGERGPSQRSGELETV</sequence>
<protein>
    <recommendedName>
        <fullName>Mas-related G-protein coupled receptor member B4</fullName>
    </recommendedName>
</protein>
<reference key="1">
    <citation type="journal article" date="2001" name="Cell">
        <title>A diverse family of GPCRs expressed in specific subsets of nociceptive sensory neurons.</title>
        <authorList>
            <person name="Dong X."/>
            <person name="Han S.-K."/>
            <person name="Zylka M.J."/>
            <person name="Simon M.I."/>
            <person name="Anderson D.J."/>
        </authorList>
    </citation>
    <scope>NUCLEOTIDE SEQUENCE [GENOMIC DNA]</scope>
    <source>
        <strain>C57BL/6J</strain>
    </source>
</reference>
<reference key="2">
    <citation type="journal article" date="2004" name="Genome Res.">
        <title>The status, quality, and expansion of the NIH full-length cDNA project: the Mammalian Gene Collection (MGC).</title>
        <authorList>
            <consortium name="The MGC Project Team"/>
        </authorList>
    </citation>
    <scope>NUCLEOTIDE SEQUENCE [LARGE SCALE MRNA] OF 4-321</scope>
</reference>
<accession>Q91ZC0</accession>
<accession>Q3B811</accession>